<name>NDPA_SHIF8</name>
<accession>Q0T2T5</accession>
<dbReference type="EMBL" id="CP000266">
    <property type="protein sequence ID" value="ABF04380.1"/>
    <property type="molecule type" value="Genomic_DNA"/>
</dbReference>
<dbReference type="RefSeq" id="WP_000050789.1">
    <property type="nucleotide sequence ID" value="NC_008258.1"/>
</dbReference>
<dbReference type="SMR" id="Q0T2T5"/>
<dbReference type="GeneID" id="75206440"/>
<dbReference type="KEGG" id="sfv:SFV_2264"/>
<dbReference type="HOGENOM" id="CLU_063050_0_1_6"/>
<dbReference type="Proteomes" id="UP000000659">
    <property type="component" value="Chromosome"/>
</dbReference>
<dbReference type="GO" id="GO:0043590">
    <property type="term" value="C:bacterial nucleoid"/>
    <property type="evidence" value="ECO:0007669"/>
    <property type="project" value="TreeGrafter"/>
</dbReference>
<dbReference type="GO" id="GO:0005737">
    <property type="term" value="C:cytoplasm"/>
    <property type="evidence" value="ECO:0007669"/>
    <property type="project" value="UniProtKB-UniRule"/>
</dbReference>
<dbReference type="GO" id="GO:0003690">
    <property type="term" value="F:double-stranded DNA binding"/>
    <property type="evidence" value="ECO:0007669"/>
    <property type="project" value="TreeGrafter"/>
</dbReference>
<dbReference type="GO" id="GO:0003727">
    <property type="term" value="F:single-stranded RNA binding"/>
    <property type="evidence" value="ECO:0007669"/>
    <property type="project" value="TreeGrafter"/>
</dbReference>
<dbReference type="HAMAP" id="MF_00730">
    <property type="entry name" value="NdpA"/>
    <property type="match status" value="1"/>
</dbReference>
<dbReference type="InterPro" id="IPR007358">
    <property type="entry name" value="Nucleoid_associated_NdpA"/>
</dbReference>
<dbReference type="NCBIfam" id="NF001557">
    <property type="entry name" value="PRK00378.1"/>
    <property type="match status" value="1"/>
</dbReference>
<dbReference type="PANTHER" id="PTHR38772">
    <property type="match status" value="1"/>
</dbReference>
<dbReference type="PANTHER" id="PTHR38772:SF1">
    <property type="entry name" value="NUCLEOID-ASSOCIATED PROTEIN YEJK"/>
    <property type="match status" value="1"/>
</dbReference>
<dbReference type="Pfam" id="PF04245">
    <property type="entry name" value="NA37"/>
    <property type="match status" value="1"/>
</dbReference>
<organism>
    <name type="scientific">Shigella flexneri serotype 5b (strain 8401)</name>
    <dbReference type="NCBI Taxonomy" id="373384"/>
    <lineage>
        <taxon>Bacteria</taxon>
        <taxon>Pseudomonadati</taxon>
        <taxon>Pseudomonadota</taxon>
        <taxon>Gammaproteobacteria</taxon>
        <taxon>Enterobacterales</taxon>
        <taxon>Enterobacteriaceae</taxon>
        <taxon>Shigella</taxon>
    </lineage>
</organism>
<keyword id="KW-0963">Cytoplasm</keyword>
<feature type="chain" id="PRO_1000045953" description="Nucleoid-associated protein YejK">
    <location>
        <begin position="1"/>
        <end position="335"/>
    </location>
</feature>
<proteinExistence type="inferred from homology"/>
<comment type="subcellular location">
    <subcellularLocation>
        <location evidence="1">Cytoplasm</location>
        <location evidence="1">Nucleoid</location>
    </subcellularLocation>
</comment>
<comment type="similarity">
    <text evidence="1">Belongs to the YejK family.</text>
</comment>
<gene>
    <name evidence="1" type="primary">yejK</name>
    <name type="ordered locus">SFV_2264</name>
</gene>
<reference key="1">
    <citation type="journal article" date="2006" name="BMC Genomics">
        <title>Complete genome sequence of Shigella flexneri 5b and comparison with Shigella flexneri 2a.</title>
        <authorList>
            <person name="Nie H."/>
            <person name="Yang F."/>
            <person name="Zhang X."/>
            <person name="Yang J."/>
            <person name="Chen L."/>
            <person name="Wang J."/>
            <person name="Xiong Z."/>
            <person name="Peng J."/>
            <person name="Sun L."/>
            <person name="Dong J."/>
            <person name="Xue Y."/>
            <person name="Xu X."/>
            <person name="Chen S."/>
            <person name="Yao Z."/>
            <person name="Shen Y."/>
            <person name="Jin Q."/>
        </authorList>
    </citation>
    <scope>NUCLEOTIDE SEQUENCE [LARGE SCALE GENOMIC DNA]</scope>
    <source>
        <strain>8401</strain>
    </source>
</reference>
<sequence length="335" mass="37823">MSLDINQIALHQLIKRDEQNLELVLRDSLLEPTETVVEMVAELHRVYSAKNKAYGLFSEESELAQTLRLQRQGEEDFLAFSRAATGRLRDELAKYPFADGGFVLFCHYRYLAVEYLLVAVLSNLSSMRVNENLDINPTHYLDINHADIVARIDLTEWETNPESTRYLTFLKGRVGRKVADFFMDFLGASEGLNAKAQNRGLLQAVDDFTAEAQLDKAERQNVRQQVYSYCNEQLQAGEEIELESLSKELAGVSEVSFTEFAAEKGYELEESFPADRSTLRQLTKFAGSGGGLTINFDAMLLGERIFWDPATDTLTIKGTPPNLRDQLQRRTSGGN</sequence>
<protein>
    <recommendedName>
        <fullName evidence="1">Nucleoid-associated protein YejK</fullName>
    </recommendedName>
</protein>
<evidence type="ECO:0000255" key="1">
    <source>
        <dbReference type="HAMAP-Rule" id="MF_00730"/>
    </source>
</evidence>